<proteinExistence type="inferred from homology"/>
<evidence type="ECO:0000255" key="1">
    <source>
        <dbReference type="HAMAP-Rule" id="MF_01059"/>
    </source>
</evidence>
<dbReference type="EC" id="3.2.1.28" evidence="1"/>
<dbReference type="EMBL" id="CU928161">
    <property type="protein sequence ID" value="CAR05142.1"/>
    <property type="molecule type" value="Genomic_DNA"/>
</dbReference>
<dbReference type="RefSeq" id="WP_000934214.1">
    <property type="nucleotide sequence ID" value="NC_011742.1"/>
</dbReference>
<dbReference type="SMR" id="B7MEM1"/>
<dbReference type="CAZy" id="GH37">
    <property type="family name" value="Glycoside Hydrolase Family 37"/>
</dbReference>
<dbReference type="KEGG" id="ecz:ECS88_3932"/>
<dbReference type="HOGENOM" id="CLU_006451_3_1_6"/>
<dbReference type="UniPathway" id="UPA00300">
    <property type="reaction ID" value="UER00535"/>
</dbReference>
<dbReference type="Proteomes" id="UP000000747">
    <property type="component" value="Chromosome"/>
</dbReference>
<dbReference type="GO" id="GO:0005737">
    <property type="term" value="C:cytoplasm"/>
    <property type="evidence" value="ECO:0007669"/>
    <property type="project" value="UniProtKB-SubCell"/>
</dbReference>
<dbReference type="GO" id="GO:0004555">
    <property type="term" value="F:alpha,alpha-trehalase activity"/>
    <property type="evidence" value="ECO:0007669"/>
    <property type="project" value="UniProtKB-UniRule"/>
</dbReference>
<dbReference type="GO" id="GO:0071474">
    <property type="term" value="P:cellular hyperosmotic response"/>
    <property type="evidence" value="ECO:0007669"/>
    <property type="project" value="InterPro"/>
</dbReference>
<dbReference type="GO" id="GO:0005993">
    <property type="term" value="P:trehalose catabolic process"/>
    <property type="evidence" value="ECO:0007669"/>
    <property type="project" value="UniProtKB-UniRule"/>
</dbReference>
<dbReference type="FunFam" id="1.50.10.10:FF:000003">
    <property type="entry name" value="Cytoplasmic trehalase"/>
    <property type="match status" value="1"/>
</dbReference>
<dbReference type="Gene3D" id="1.50.10.10">
    <property type="match status" value="1"/>
</dbReference>
<dbReference type="HAMAP" id="MF_01059">
    <property type="entry name" value="Cyt_trehalase"/>
    <property type="match status" value="1"/>
</dbReference>
<dbReference type="InterPro" id="IPR008928">
    <property type="entry name" value="6-hairpin_glycosidase_sf"/>
</dbReference>
<dbReference type="InterPro" id="IPR012341">
    <property type="entry name" value="6hp_glycosidase-like_sf"/>
</dbReference>
<dbReference type="InterPro" id="IPR023715">
    <property type="entry name" value="Cyt_trehalase"/>
</dbReference>
<dbReference type="InterPro" id="IPR001661">
    <property type="entry name" value="Glyco_hydro_37"/>
</dbReference>
<dbReference type="InterPro" id="IPR018232">
    <property type="entry name" value="Glyco_hydro_37_CS"/>
</dbReference>
<dbReference type="NCBIfam" id="NF009773">
    <property type="entry name" value="PRK13270.1"/>
    <property type="match status" value="1"/>
</dbReference>
<dbReference type="NCBIfam" id="NF009774">
    <property type="entry name" value="PRK13271.1"/>
    <property type="match status" value="1"/>
</dbReference>
<dbReference type="PANTHER" id="PTHR23403:SF8">
    <property type="entry name" value="CYTOPLASMIC TREHALASE"/>
    <property type="match status" value="1"/>
</dbReference>
<dbReference type="PANTHER" id="PTHR23403">
    <property type="entry name" value="TREHALASE"/>
    <property type="match status" value="1"/>
</dbReference>
<dbReference type="Pfam" id="PF01204">
    <property type="entry name" value="Trehalase"/>
    <property type="match status" value="1"/>
</dbReference>
<dbReference type="PRINTS" id="PR00744">
    <property type="entry name" value="GLHYDRLASE37"/>
</dbReference>
<dbReference type="SUPFAM" id="SSF48208">
    <property type="entry name" value="Six-hairpin glycosidases"/>
    <property type="match status" value="1"/>
</dbReference>
<dbReference type="PROSITE" id="PS00927">
    <property type="entry name" value="TREHALASE_1"/>
    <property type="match status" value="1"/>
</dbReference>
<dbReference type="PROSITE" id="PS00928">
    <property type="entry name" value="TREHALASE_2"/>
    <property type="match status" value="1"/>
</dbReference>
<comment type="function">
    <text evidence="1">Hydrolyzes trehalose to glucose. Could be involved, in cells returning to low osmolarity conditions, in the utilization of the accumulated cytoplasmic trehalose, which was synthesized in response to high osmolarity.</text>
</comment>
<comment type="catalytic activity">
    <reaction evidence="1">
        <text>alpha,alpha-trehalose + H2O = alpha-D-glucose + beta-D-glucose</text>
        <dbReference type="Rhea" id="RHEA:32675"/>
        <dbReference type="ChEBI" id="CHEBI:15377"/>
        <dbReference type="ChEBI" id="CHEBI:15903"/>
        <dbReference type="ChEBI" id="CHEBI:16551"/>
        <dbReference type="ChEBI" id="CHEBI:17925"/>
        <dbReference type="EC" id="3.2.1.28"/>
    </reaction>
</comment>
<comment type="pathway">
    <text evidence="1">Glycan degradation; trehalose degradation; D-glucose from alpha,alpha-trehalose: step 1/1.</text>
</comment>
<comment type="subunit">
    <text evidence="1">Monomer.</text>
</comment>
<comment type="subcellular location">
    <subcellularLocation>
        <location evidence="1">Cytoplasm</location>
    </subcellularLocation>
</comment>
<comment type="similarity">
    <text evidence="1">Belongs to the glycosyl hydrolase 37 family.</text>
</comment>
<accession>B7MEM1</accession>
<sequence>MLNQKIQNPNPDELMIEVDLCYELDPYELKLDEMIEAEPEPEMIEGLPASDALTPADRYLELFEHVQSAKIFPDSKTFPDCAPKMDPLDILIRYRKVRRHRDFDLRKFVENHFWLPEVYSSEYVSDPQNSLKEHIDQLWPVLTREPQDHIPWSSLLALPQSYIVPGGRFSETYYWDSYFTMLGLAESGREDLLKCMADNFAWMIENYGHIPNGNRTYYLSRSQPPVFALMVELFEEDGVRGARRYLDHLKMEYAFWMDGAESLIPNQAYRHVVRMPDGSLLNRYWDDRDTPRDESWLEDVETAKHSGRPPNEVYRDLRAGAASGWDYSSRWLRDTGRLASIRTTQFIPIDLNAFLFKLESAIANISALKGEKETEALFRQKASARRDAVNRYLWDDENGIYRDYDWRREQLALFSAAAIVPLYVGMANHEQADRLANAVRSRLLTPGGILASEYETGEQWDKPNGWAPLQWMAIQGFKMYGDDLLGDEIARNWLKTVNQFYLEQHKLIEKYHIADGVPREGGGGEYPLQDGFGWTNGVVRRLIGLYGEP</sequence>
<keyword id="KW-0963">Cytoplasm</keyword>
<keyword id="KW-0326">Glycosidase</keyword>
<keyword id="KW-0378">Hydrolase</keyword>
<keyword id="KW-1185">Reference proteome</keyword>
<organism>
    <name type="scientific">Escherichia coli O45:K1 (strain S88 / ExPEC)</name>
    <dbReference type="NCBI Taxonomy" id="585035"/>
    <lineage>
        <taxon>Bacteria</taxon>
        <taxon>Pseudomonadati</taxon>
        <taxon>Pseudomonadota</taxon>
        <taxon>Gammaproteobacteria</taxon>
        <taxon>Enterobacterales</taxon>
        <taxon>Enterobacteriaceae</taxon>
        <taxon>Escherichia</taxon>
    </lineage>
</organism>
<reference key="1">
    <citation type="journal article" date="2009" name="PLoS Genet.">
        <title>Organised genome dynamics in the Escherichia coli species results in highly diverse adaptive paths.</title>
        <authorList>
            <person name="Touchon M."/>
            <person name="Hoede C."/>
            <person name="Tenaillon O."/>
            <person name="Barbe V."/>
            <person name="Baeriswyl S."/>
            <person name="Bidet P."/>
            <person name="Bingen E."/>
            <person name="Bonacorsi S."/>
            <person name="Bouchier C."/>
            <person name="Bouvet O."/>
            <person name="Calteau A."/>
            <person name="Chiapello H."/>
            <person name="Clermont O."/>
            <person name="Cruveiller S."/>
            <person name="Danchin A."/>
            <person name="Diard M."/>
            <person name="Dossat C."/>
            <person name="Karoui M.E."/>
            <person name="Frapy E."/>
            <person name="Garry L."/>
            <person name="Ghigo J.M."/>
            <person name="Gilles A.M."/>
            <person name="Johnson J."/>
            <person name="Le Bouguenec C."/>
            <person name="Lescat M."/>
            <person name="Mangenot S."/>
            <person name="Martinez-Jehanne V."/>
            <person name="Matic I."/>
            <person name="Nassif X."/>
            <person name="Oztas S."/>
            <person name="Petit M.A."/>
            <person name="Pichon C."/>
            <person name="Rouy Z."/>
            <person name="Ruf C.S."/>
            <person name="Schneider D."/>
            <person name="Tourret J."/>
            <person name="Vacherie B."/>
            <person name="Vallenet D."/>
            <person name="Medigue C."/>
            <person name="Rocha E.P.C."/>
            <person name="Denamur E."/>
        </authorList>
    </citation>
    <scope>NUCLEOTIDE SEQUENCE [LARGE SCALE GENOMIC DNA]</scope>
    <source>
        <strain>S88 / ExPEC</strain>
    </source>
</reference>
<protein>
    <recommendedName>
        <fullName evidence="1">Cytoplasmic trehalase</fullName>
        <ecNumber evidence="1">3.2.1.28</ecNumber>
    </recommendedName>
    <alternativeName>
        <fullName evidence="1">Alpha,alpha-trehalase</fullName>
    </alternativeName>
    <alternativeName>
        <fullName evidence="1">Alpha,alpha-trehalose glucohydrolase</fullName>
    </alternativeName>
</protein>
<gene>
    <name evidence="1" type="primary">treF</name>
    <name type="ordered locus">ECS88_3932</name>
</gene>
<feature type="chain" id="PRO_1000136399" description="Cytoplasmic trehalase">
    <location>
        <begin position="1"/>
        <end position="549"/>
    </location>
</feature>
<feature type="active site" description="Proton donor/acceptor" evidence="1">
    <location>
        <position position="326"/>
    </location>
</feature>
<feature type="active site" description="Proton donor/acceptor" evidence="1">
    <location>
        <position position="509"/>
    </location>
</feature>
<feature type="binding site" evidence="1">
    <location>
        <position position="168"/>
    </location>
    <ligand>
        <name>substrate</name>
    </ligand>
</feature>
<feature type="binding site" evidence="1">
    <location>
        <begin position="175"/>
        <end position="176"/>
    </location>
    <ligand>
        <name>substrate</name>
    </ligand>
</feature>
<feature type="binding site" evidence="1">
    <location>
        <position position="212"/>
    </location>
    <ligand>
        <name>substrate</name>
    </ligand>
</feature>
<feature type="binding site" evidence="1">
    <location>
        <begin position="221"/>
        <end position="223"/>
    </location>
    <ligand>
        <name>substrate</name>
    </ligand>
</feature>
<feature type="binding site" evidence="1">
    <location>
        <begin position="292"/>
        <end position="294"/>
    </location>
    <ligand>
        <name>substrate</name>
    </ligand>
</feature>
<feature type="binding site" evidence="1">
    <location>
        <position position="324"/>
    </location>
    <ligand>
        <name>substrate</name>
    </ligand>
</feature>
<feature type="binding site" evidence="1">
    <location>
        <position position="525"/>
    </location>
    <ligand>
        <name>substrate</name>
    </ligand>
</feature>
<name>TREF_ECO45</name>